<feature type="signal peptide" evidence="2">
    <location>
        <begin position="1"/>
        <end position="23"/>
    </location>
</feature>
<feature type="chain" id="PRO_0000295090" description="Cysteine-rich receptor-like protein kinase 46">
    <location>
        <begin position="24"/>
        <end position="625"/>
    </location>
</feature>
<feature type="topological domain" description="Extracellular" evidence="2">
    <location>
        <begin position="24"/>
        <end position="252"/>
    </location>
</feature>
<feature type="transmembrane region" description="Helical" evidence="2">
    <location>
        <begin position="253"/>
        <end position="273"/>
    </location>
</feature>
<feature type="topological domain" description="Cytoplasmic" evidence="2">
    <location>
        <begin position="274"/>
        <end position="625"/>
    </location>
</feature>
<feature type="domain" description="Gnk2-homologous 1" evidence="4">
    <location>
        <begin position="29"/>
        <end position="130"/>
    </location>
</feature>
<feature type="domain" description="Gnk2-homologous 2" evidence="4">
    <location>
        <begin position="135"/>
        <end position="237"/>
    </location>
</feature>
<feature type="domain" description="Protein kinase" evidence="3">
    <location>
        <begin position="331"/>
        <end position="621"/>
    </location>
</feature>
<feature type="active site" description="Proton acceptor" evidence="3 5">
    <location>
        <position position="454"/>
    </location>
</feature>
<feature type="binding site" evidence="3">
    <location>
        <begin position="337"/>
        <end position="345"/>
    </location>
    <ligand>
        <name>ATP</name>
        <dbReference type="ChEBI" id="CHEBI:30616"/>
    </ligand>
</feature>
<feature type="binding site" evidence="3">
    <location>
        <position position="359"/>
    </location>
    <ligand>
        <name>ATP</name>
        <dbReference type="ChEBI" id="CHEBI:30616"/>
    </ligand>
</feature>
<feature type="modified residue" description="Phosphotyrosine" evidence="1">
    <location>
        <position position="404"/>
    </location>
</feature>
<feature type="modified residue" description="Phosphoserine" evidence="1">
    <location>
        <position position="458"/>
    </location>
</feature>
<feature type="modified residue" description="Phosphothreonine" evidence="1">
    <location>
        <position position="499"/>
    </location>
</feature>
<feature type="modified residue" description="Phosphotyrosine" evidence="1">
    <location>
        <position position="507"/>
    </location>
</feature>
<feature type="glycosylation site" description="N-linked (GlcNAc...) asparagine" evidence="2">
    <location>
        <position position="38"/>
    </location>
</feature>
<feature type="glycosylation site" description="N-linked (GlcNAc...) asparagine" evidence="2">
    <location>
        <position position="127"/>
    </location>
</feature>
<feature type="glycosylation site" description="N-linked (GlcNAc...) asparagine" evidence="2">
    <location>
        <position position="234"/>
    </location>
</feature>
<feature type="glycosylation site" description="N-linked (GlcNAc...) asparagine" evidence="2">
    <location>
        <position position="252"/>
    </location>
</feature>
<proteinExistence type="inferred from homology"/>
<keyword id="KW-0067">ATP-binding</keyword>
<keyword id="KW-0325">Glycoprotein</keyword>
<keyword id="KW-0418">Kinase</keyword>
<keyword id="KW-0472">Membrane</keyword>
<keyword id="KW-0547">Nucleotide-binding</keyword>
<keyword id="KW-0597">Phosphoprotein</keyword>
<keyword id="KW-0675">Receptor</keyword>
<keyword id="KW-1185">Reference proteome</keyword>
<keyword id="KW-0677">Repeat</keyword>
<keyword id="KW-0723">Serine/threonine-protein kinase</keyword>
<keyword id="KW-0732">Signal</keyword>
<keyword id="KW-0808">Transferase</keyword>
<keyword id="KW-0812">Transmembrane</keyword>
<keyword id="KW-1133">Transmembrane helix</keyword>
<organism>
    <name type="scientific">Arabidopsis thaliana</name>
    <name type="common">Mouse-ear cress</name>
    <dbReference type="NCBI Taxonomy" id="3702"/>
    <lineage>
        <taxon>Eukaryota</taxon>
        <taxon>Viridiplantae</taxon>
        <taxon>Streptophyta</taxon>
        <taxon>Embryophyta</taxon>
        <taxon>Tracheophyta</taxon>
        <taxon>Spermatophyta</taxon>
        <taxon>Magnoliopsida</taxon>
        <taxon>eudicotyledons</taxon>
        <taxon>Gunneridae</taxon>
        <taxon>Pentapetalae</taxon>
        <taxon>rosids</taxon>
        <taxon>malvids</taxon>
        <taxon>Brassicales</taxon>
        <taxon>Brassicaceae</taxon>
        <taxon>Camelineae</taxon>
        <taxon>Arabidopsis</taxon>
    </lineage>
</organism>
<name>CRK46_ARATH</name>
<reference key="1">
    <citation type="journal article" date="1999" name="Nature">
        <title>Sequence and analysis of chromosome 4 of the plant Arabidopsis thaliana.</title>
        <authorList>
            <person name="Mayer K.F.X."/>
            <person name="Schueller C."/>
            <person name="Wambutt R."/>
            <person name="Murphy G."/>
            <person name="Volckaert G."/>
            <person name="Pohl T."/>
            <person name="Duesterhoeft A."/>
            <person name="Stiekema W."/>
            <person name="Entian K.-D."/>
            <person name="Terryn N."/>
            <person name="Harris B."/>
            <person name="Ansorge W."/>
            <person name="Brandt P."/>
            <person name="Grivell L.A."/>
            <person name="Rieger M."/>
            <person name="Weichselgartner M."/>
            <person name="de Simone V."/>
            <person name="Obermaier B."/>
            <person name="Mache R."/>
            <person name="Mueller M."/>
            <person name="Kreis M."/>
            <person name="Delseny M."/>
            <person name="Puigdomenech P."/>
            <person name="Watson M."/>
            <person name="Schmidtheini T."/>
            <person name="Reichert B."/>
            <person name="Portetelle D."/>
            <person name="Perez-Alonso M."/>
            <person name="Boutry M."/>
            <person name="Bancroft I."/>
            <person name="Vos P."/>
            <person name="Hoheisel J."/>
            <person name="Zimmermann W."/>
            <person name="Wedler H."/>
            <person name="Ridley P."/>
            <person name="Langham S.-A."/>
            <person name="McCullagh B."/>
            <person name="Bilham L."/>
            <person name="Robben J."/>
            <person name="van der Schueren J."/>
            <person name="Grymonprez B."/>
            <person name="Chuang Y.-J."/>
            <person name="Vandenbussche F."/>
            <person name="Braeken M."/>
            <person name="Weltjens I."/>
            <person name="Voet M."/>
            <person name="Bastiaens I."/>
            <person name="Aert R."/>
            <person name="Defoor E."/>
            <person name="Weitzenegger T."/>
            <person name="Bothe G."/>
            <person name="Ramsperger U."/>
            <person name="Hilbert H."/>
            <person name="Braun M."/>
            <person name="Holzer E."/>
            <person name="Brandt A."/>
            <person name="Peters S."/>
            <person name="van Staveren M."/>
            <person name="Dirkse W."/>
            <person name="Mooijman P."/>
            <person name="Klein Lankhorst R."/>
            <person name="Rose M."/>
            <person name="Hauf J."/>
            <person name="Koetter P."/>
            <person name="Berneiser S."/>
            <person name="Hempel S."/>
            <person name="Feldpausch M."/>
            <person name="Lamberth S."/>
            <person name="Van den Daele H."/>
            <person name="De Keyser A."/>
            <person name="Buysshaert C."/>
            <person name="Gielen J."/>
            <person name="Villarroel R."/>
            <person name="De Clercq R."/>
            <person name="van Montagu M."/>
            <person name="Rogers J."/>
            <person name="Cronin A."/>
            <person name="Quail M.A."/>
            <person name="Bray-Allen S."/>
            <person name="Clark L."/>
            <person name="Doggett J."/>
            <person name="Hall S."/>
            <person name="Kay M."/>
            <person name="Lennard N."/>
            <person name="McLay K."/>
            <person name="Mayes R."/>
            <person name="Pettett A."/>
            <person name="Rajandream M.A."/>
            <person name="Lyne M."/>
            <person name="Benes V."/>
            <person name="Rechmann S."/>
            <person name="Borkova D."/>
            <person name="Bloecker H."/>
            <person name="Scharfe M."/>
            <person name="Grimm M."/>
            <person name="Loehnert T.-H."/>
            <person name="Dose S."/>
            <person name="de Haan M."/>
            <person name="Maarse A.C."/>
            <person name="Schaefer M."/>
            <person name="Mueller-Auer S."/>
            <person name="Gabel C."/>
            <person name="Fuchs M."/>
            <person name="Fartmann B."/>
            <person name="Granderath K."/>
            <person name="Dauner D."/>
            <person name="Herzl A."/>
            <person name="Neumann S."/>
            <person name="Argiriou A."/>
            <person name="Vitale D."/>
            <person name="Liguori R."/>
            <person name="Piravandi E."/>
            <person name="Massenet O."/>
            <person name="Quigley F."/>
            <person name="Clabauld G."/>
            <person name="Muendlein A."/>
            <person name="Felber R."/>
            <person name="Schnabl S."/>
            <person name="Hiller R."/>
            <person name="Schmidt W."/>
            <person name="Lecharny A."/>
            <person name="Aubourg S."/>
            <person name="Chefdor F."/>
            <person name="Cooke R."/>
            <person name="Berger C."/>
            <person name="Monfort A."/>
            <person name="Casacuberta E."/>
            <person name="Gibbons T."/>
            <person name="Weber N."/>
            <person name="Vandenbol M."/>
            <person name="Bargues M."/>
            <person name="Terol J."/>
            <person name="Torres A."/>
            <person name="Perez-Perez A."/>
            <person name="Purnelle B."/>
            <person name="Bent E."/>
            <person name="Johnson S."/>
            <person name="Tacon D."/>
            <person name="Jesse T."/>
            <person name="Heijnen L."/>
            <person name="Schwarz S."/>
            <person name="Scholler P."/>
            <person name="Heber S."/>
            <person name="Francs P."/>
            <person name="Bielke C."/>
            <person name="Frishman D."/>
            <person name="Haase D."/>
            <person name="Lemcke K."/>
            <person name="Mewes H.-W."/>
            <person name="Stocker S."/>
            <person name="Zaccaria P."/>
            <person name="Bevan M."/>
            <person name="Wilson R.K."/>
            <person name="de la Bastide M."/>
            <person name="Habermann K."/>
            <person name="Parnell L."/>
            <person name="Dedhia N."/>
            <person name="Gnoj L."/>
            <person name="Schutz K."/>
            <person name="Huang E."/>
            <person name="Spiegel L."/>
            <person name="Sekhon M."/>
            <person name="Murray J."/>
            <person name="Sheet P."/>
            <person name="Cordes M."/>
            <person name="Abu-Threideh J."/>
            <person name="Stoneking T."/>
            <person name="Kalicki J."/>
            <person name="Graves T."/>
            <person name="Harmon G."/>
            <person name="Edwards J."/>
            <person name="Latreille P."/>
            <person name="Courtney L."/>
            <person name="Cloud J."/>
            <person name="Abbott A."/>
            <person name="Scott K."/>
            <person name="Johnson D."/>
            <person name="Minx P."/>
            <person name="Bentley D."/>
            <person name="Fulton B."/>
            <person name="Miller N."/>
            <person name="Greco T."/>
            <person name="Kemp K."/>
            <person name="Kramer J."/>
            <person name="Fulton L."/>
            <person name="Mardis E."/>
            <person name="Dante M."/>
            <person name="Pepin K."/>
            <person name="Hillier L.W."/>
            <person name="Nelson J."/>
            <person name="Spieth J."/>
            <person name="Ryan E."/>
            <person name="Andrews S."/>
            <person name="Geisel C."/>
            <person name="Layman D."/>
            <person name="Du H."/>
            <person name="Ali J."/>
            <person name="Berghoff A."/>
            <person name="Jones K."/>
            <person name="Drone K."/>
            <person name="Cotton M."/>
            <person name="Joshu C."/>
            <person name="Antonoiu B."/>
            <person name="Zidanic M."/>
            <person name="Strong C."/>
            <person name="Sun H."/>
            <person name="Lamar B."/>
            <person name="Yordan C."/>
            <person name="Ma P."/>
            <person name="Zhong J."/>
            <person name="Preston R."/>
            <person name="Vil D."/>
            <person name="Shekher M."/>
            <person name="Matero A."/>
            <person name="Shah R."/>
            <person name="Swaby I.K."/>
            <person name="O'Shaughnessy A."/>
            <person name="Rodriguez M."/>
            <person name="Hoffman J."/>
            <person name="Till S."/>
            <person name="Granat S."/>
            <person name="Shohdy N."/>
            <person name="Hasegawa A."/>
            <person name="Hameed A."/>
            <person name="Lodhi M."/>
            <person name="Johnson A."/>
            <person name="Chen E."/>
            <person name="Marra M.A."/>
            <person name="Martienssen R."/>
            <person name="McCombie W.R."/>
        </authorList>
    </citation>
    <scope>NUCLEOTIDE SEQUENCE [LARGE SCALE GENOMIC DNA]</scope>
    <source>
        <strain>cv. Columbia</strain>
    </source>
</reference>
<reference key="2">
    <citation type="journal article" date="2017" name="Plant J.">
        <title>Araport11: a complete reannotation of the Arabidopsis thaliana reference genome.</title>
        <authorList>
            <person name="Cheng C.Y."/>
            <person name="Krishnakumar V."/>
            <person name="Chan A.P."/>
            <person name="Thibaud-Nissen F."/>
            <person name="Schobel S."/>
            <person name="Town C.D."/>
        </authorList>
    </citation>
    <scope>GENOME REANNOTATION</scope>
    <source>
        <strain>cv. Columbia</strain>
    </source>
</reference>
<evidence type="ECO:0000250" key="1">
    <source>
        <dbReference type="UniProtKB" id="O48814"/>
    </source>
</evidence>
<evidence type="ECO:0000255" key="2"/>
<evidence type="ECO:0000255" key="3">
    <source>
        <dbReference type="PROSITE-ProRule" id="PRU00159"/>
    </source>
</evidence>
<evidence type="ECO:0000255" key="4">
    <source>
        <dbReference type="PROSITE-ProRule" id="PRU00806"/>
    </source>
</evidence>
<evidence type="ECO:0000255" key="5">
    <source>
        <dbReference type="PROSITE-ProRule" id="PRU10027"/>
    </source>
</evidence>
<evidence type="ECO:0000305" key="6"/>
<protein>
    <recommendedName>
        <fullName evidence="6">Cysteine-rich receptor-like protein kinase 46</fullName>
        <shortName evidence="6">Cysteine-rich RLK46</shortName>
        <ecNumber evidence="1">2.7.11.1</ecNumber>
    </recommendedName>
</protein>
<dbReference type="EC" id="2.7.11.1" evidence="1"/>
<dbReference type="EMBL" id="AL049917">
    <property type="status" value="NOT_ANNOTATED_CDS"/>
    <property type="molecule type" value="Genomic_DNA"/>
</dbReference>
<dbReference type="EMBL" id="AL161573">
    <property type="protein sequence ID" value="CAB81455.1"/>
    <property type="molecule type" value="Genomic_DNA"/>
</dbReference>
<dbReference type="EMBL" id="CP002687">
    <property type="protein sequence ID" value="AEE85521.1"/>
    <property type="molecule type" value="Genomic_DNA"/>
</dbReference>
<dbReference type="PIR" id="T10661">
    <property type="entry name" value="T10661"/>
</dbReference>
<dbReference type="RefSeq" id="NP_194596.1">
    <property type="nucleotide sequence ID" value="NM_119009.1"/>
</dbReference>
<dbReference type="SMR" id="Q9M0G5"/>
<dbReference type="STRING" id="3702.Q9M0G5"/>
<dbReference type="GlyCosmos" id="Q9M0G5">
    <property type="glycosylation" value="4 sites, No reported glycans"/>
</dbReference>
<dbReference type="GlyGen" id="Q9M0G5">
    <property type="glycosylation" value="4 sites"/>
</dbReference>
<dbReference type="iPTMnet" id="Q9M0G5"/>
<dbReference type="PaxDb" id="3702-AT4G28670.1"/>
<dbReference type="ProteomicsDB" id="224417"/>
<dbReference type="EnsemblPlants" id="AT4G28670.1">
    <property type="protein sequence ID" value="AT4G28670.1"/>
    <property type="gene ID" value="AT4G28670"/>
</dbReference>
<dbReference type="GeneID" id="828985"/>
<dbReference type="Gramene" id="AT4G28670.1">
    <property type="protein sequence ID" value="AT4G28670.1"/>
    <property type="gene ID" value="AT4G28670"/>
</dbReference>
<dbReference type="KEGG" id="ath:AT4G28670"/>
<dbReference type="Araport" id="AT4G28670"/>
<dbReference type="TAIR" id="AT4G28670"/>
<dbReference type="eggNOG" id="ENOG502QUCX">
    <property type="taxonomic scope" value="Eukaryota"/>
</dbReference>
<dbReference type="HOGENOM" id="CLU_000288_35_6_1"/>
<dbReference type="InParanoid" id="Q9M0G5"/>
<dbReference type="OMA" id="MAICWNT"/>
<dbReference type="OrthoDB" id="1908121at2759"/>
<dbReference type="PhylomeDB" id="Q9M0G5"/>
<dbReference type="PRO" id="PR:Q9M0G5"/>
<dbReference type="Proteomes" id="UP000006548">
    <property type="component" value="Chromosome 4"/>
</dbReference>
<dbReference type="ExpressionAtlas" id="Q9M0G5">
    <property type="expression patterns" value="baseline and differential"/>
</dbReference>
<dbReference type="GO" id="GO:0016020">
    <property type="term" value="C:membrane"/>
    <property type="evidence" value="ECO:0007669"/>
    <property type="project" value="UniProtKB-SubCell"/>
</dbReference>
<dbReference type="GO" id="GO:0005524">
    <property type="term" value="F:ATP binding"/>
    <property type="evidence" value="ECO:0007669"/>
    <property type="project" value="UniProtKB-KW"/>
</dbReference>
<dbReference type="GO" id="GO:0106310">
    <property type="term" value="F:protein serine kinase activity"/>
    <property type="evidence" value="ECO:0007669"/>
    <property type="project" value="RHEA"/>
</dbReference>
<dbReference type="GO" id="GO:0004674">
    <property type="term" value="F:protein serine/threonine kinase activity"/>
    <property type="evidence" value="ECO:0007669"/>
    <property type="project" value="UniProtKB-KW"/>
</dbReference>
<dbReference type="CDD" id="cd23509">
    <property type="entry name" value="Gnk2-like"/>
    <property type="match status" value="2"/>
</dbReference>
<dbReference type="CDD" id="cd14066">
    <property type="entry name" value="STKc_IRAK"/>
    <property type="match status" value="1"/>
</dbReference>
<dbReference type="FunFam" id="1.10.510.10:FF:000336">
    <property type="entry name" value="Cysteine-rich receptor-like protein kinase 2"/>
    <property type="match status" value="1"/>
</dbReference>
<dbReference type="FunFam" id="3.30.430.20:FF:000015">
    <property type="entry name" value="Cysteine-rich receptor-like protein kinase 3"/>
    <property type="match status" value="1"/>
</dbReference>
<dbReference type="FunFam" id="3.30.200.20:FF:000952">
    <property type="entry name" value="Putative DUF26-domain protein kinase"/>
    <property type="match status" value="1"/>
</dbReference>
<dbReference type="Gene3D" id="3.30.430.20">
    <property type="entry name" value="Gnk2 domain, C-X8-C-X2-C motif"/>
    <property type="match status" value="2"/>
</dbReference>
<dbReference type="Gene3D" id="3.30.200.20">
    <property type="entry name" value="Phosphorylase Kinase, domain 1"/>
    <property type="match status" value="1"/>
</dbReference>
<dbReference type="Gene3D" id="1.10.510.10">
    <property type="entry name" value="Transferase(Phosphotransferase) domain 1"/>
    <property type="match status" value="1"/>
</dbReference>
<dbReference type="InterPro" id="IPR052059">
    <property type="entry name" value="CR_Ser/Thr_kinase"/>
</dbReference>
<dbReference type="InterPro" id="IPR002902">
    <property type="entry name" value="GNK2"/>
</dbReference>
<dbReference type="InterPro" id="IPR038408">
    <property type="entry name" value="GNK2_sf"/>
</dbReference>
<dbReference type="InterPro" id="IPR011009">
    <property type="entry name" value="Kinase-like_dom_sf"/>
</dbReference>
<dbReference type="InterPro" id="IPR000719">
    <property type="entry name" value="Prot_kinase_dom"/>
</dbReference>
<dbReference type="InterPro" id="IPR017441">
    <property type="entry name" value="Protein_kinase_ATP_BS"/>
</dbReference>
<dbReference type="InterPro" id="IPR008271">
    <property type="entry name" value="Ser/Thr_kinase_AS"/>
</dbReference>
<dbReference type="PANTHER" id="PTHR47973">
    <property type="entry name" value="CYSTEINE-RICH RECEPTOR-LIKE PROTEIN KINASE 3"/>
    <property type="match status" value="1"/>
</dbReference>
<dbReference type="Pfam" id="PF00069">
    <property type="entry name" value="Pkinase"/>
    <property type="match status" value="1"/>
</dbReference>
<dbReference type="Pfam" id="PF01657">
    <property type="entry name" value="Stress-antifung"/>
    <property type="match status" value="2"/>
</dbReference>
<dbReference type="SMART" id="SM00220">
    <property type="entry name" value="S_TKc"/>
    <property type="match status" value="1"/>
</dbReference>
<dbReference type="SUPFAM" id="SSF56112">
    <property type="entry name" value="Protein kinase-like (PK-like)"/>
    <property type="match status" value="1"/>
</dbReference>
<dbReference type="PROSITE" id="PS51473">
    <property type="entry name" value="GNK2"/>
    <property type="match status" value="2"/>
</dbReference>
<dbReference type="PROSITE" id="PS00107">
    <property type="entry name" value="PROTEIN_KINASE_ATP"/>
    <property type="match status" value="1"/>
</dbReference>
<dbReference type="PROSITE" id="PS50011">
    <property type="entry name" value="PROTEIN_KINASE_DOM"/>
    <property type="match status" value="1"/>
</dbReference>
<dbReference type="PROSITE" id="PS00108">
    <property type="entry name" value="PROTEIN_KINASE_ST"/>
    <property type="match status" value="1"/>
</dbReference>
<sequence length="625" mass="70182">MASTLISSLAVVLPLTLLAPSMSMKISRIDVLGYICNNGTVSNEEAYRRSYQINLDAIRGDMRHVKFGTHEHGDPPERMYVLSQCVSDLSSDECSLCWSRATDLLSQCFPATGGWFHLDGCFVRADNYSFYQEPVSHQDTKICASDKEKSAEFKGLVKEVTKSIVEAAPYSRGFSVAKMGIRDLTVYGLGVCWRTLNDELCKLCLADGALSVTSCLPSKEGFALNAGCYLRYSNYTFYNERGLLAMSFTKENLTYIFVISMVGVLAIAAGFWCGKCFYMRTSPKKKIKGTKTKKFHLFGHLRIEKESESICTESHLMSFEYSTLKKATNNFNESCKLGVGGYGEVFKGTLSDGREIAIKRLHVSGKKPRDEIHNEIDVISRCQHKNLVRLLGCCFTNMNSFIVYEFLANTSLDHILFNPEKKKELDWKKRRTIILGTAEGLEYLHETCKIIHRDIKASNILLDLKYKPKISDFGLAKFYPEGGKDIPASSLSPSSIAGTLGYMAPEYISKGRLSNKIDAYSFGVLVLEITSGFRNNKFRSDNSLETLVTQVWKCFASNKMEEMIDKDMGEDTDKQEMKRVMQIGLLCTQESPQLRPTMSKVIQMVSSTDIVLPTPTKPPFLHDSM</sequence>
<comment type="catalytic activity">
    <reaction evidence="1">
        <text>L-seryl-[protein] + ATP = O-phospho-L-seryl-[protein] + ADP + H(+)</text>
        <dbReference type="Rhea" id="RHEA:17989"/>
        <dbReference type="Rhea" id="RHEA-COMP:9863"/>
        <dbReference type="Rhea" id="RHEA-COMP:11604"/>
        <dbReference type="ChEBI" id="CHEBI:15378"/>
        <dbReference type="ChEBI" id="CHEBI:29999"/>
        <dbReference type="ChEBI" id="CHEBI:30616"/>
        <dbReference type="ChEBI" id="CHEBI:83421"/>
        <dbReference type="ChEBI" id="CHEBI:456216"/>
        <dbReference type="EC" id="2.7.11.1"/>
    </reaction>
</comment>
<comment type="catalytic activity">
    <reaction evidence="1">
        <text>L-threonyl-[protein] + ATP = O-phospho-L-threonyl-[protein] + ADP + H(+)</text>
        <dbReference type="Rhea" id="RHEA:46608"/>
        <dbReference type="Rhea" id="RHEA-COMP:11060"/>
        <dbReference type="Rhea" id="RHEA-COMP:11605"/>
        <dbReference type="ChEBI" id="CHEBI:15378"/>
        <dbReference type="ChEBI" id="CHEBI:30013"/>
        <dbReference type="ChEBI" id="CHEBI:30616"/>
        <dbReference type="ChEBI" id="CHEBI:61977"/>
        <dbReference type="ChEBI" id="CHEBI:456216"/>
        <dbReference type="EC" id="2.7.11.1"/>
    </reaction>
</comment>
<comment type="subcellular location">
    <subcellularLocation>
        <location evidence="6">Membrane</location>
        <topology evidence="6">Single-pass membrane protein</topology>
    </subcellularLocation>
</comment>
<comment type="similarity">
    <text evidence="3">Belongs to the protein kinase superfamily. Ser/Thr protein kinase family. CRK subfamily.</text>
</comment>
<accession>Q9M0G5</accession>
<gene>
    <name evidence="6" type="primary">CRK46</name>
    <name type="ordered locus">At4g28670</name>
    <name type="ORF">T5F17.120</name>
</gene>